<dbReference type="EC" id="2.4.1.18" evidence="1"/>
<dbReference type="EMBL" id="BA000032">
    <property type="protein sequence ID" value="BAC62961.1"/>
    <property type="molecule type" value="Genomic_DNA"/>
</dbReference>
<dbReference type="RefSeq" id="NP_801128.1">
    <property type="nucleotide sequence ID" value="NC_004605.1"/>
</dbReference>
<dbReference type="SMR" id="Q87FR0"/>
<dbReference type="CAZy" id="CBM48">
    <property type="family name" value="Carbohydrate-Binding Module Family 48"/>
</dbReference>
<dbReference type="CAZy" id="GH13">
    <property type="family name" value="Glycoside Hydrolase Family 13"/>
</dbReference>
<dbReference type="KEGG" id="vpa:VPA1618"/>
<dbReference type="PATRIC" id="fig|223926.6.peg.4538"/>
<dbReference type="eggNOG" id="COG0296">
    <property type="taxonomic scope" value="Bacteria"/>
</dbReference>
<dbReference type="HOGENOM" id="CLU_004245_3_2_6"/>
<dbReference type="UniPathway" id="UPA00164"/>
<dbReference type="Proteomes" id="UP000002493">
    <property type="component" value="Chromosome 2"/>
</dbReference>
<dbReference type="GO" id="GO:0005829">
    <property type="term" value="C:cytosol"/>
    <property type="evidence" value="ECO:0007669"/>
    <property type="project" value="TreeGrafter"/>
</dbReference>
<dbReference type="GO" id="GO:0003844">
    <property type="term" value="F:1,4-alpha-glucan branching enzyme activity"/>
    <property type="evidence" value="ECO:0007669"/>
    <property type="project" value="UniProtKB-UniRule"/>
</dbReference>
<dbReference type="GO" id="GO:0043169">
    <property type="term" value="F:cation binding"/>
    <property type="evidence" value="ECO:0007669"/>
    <property type="project" value="InterPro"/>
</dbReference>
<dbReference type="GO" id="GO:0004553">
    <property type="term" value="F:hydrolase activity, hydrolyzing O-glycosyl compounds"/>
    <property type="evidence" value="ECO:0007669"/>
    <property type="project" value="InterPro"/>
</dbReference>
<dbReference type="GO" id="GO:0005978">
    <property type="term" value="P:glycogen biosynthetic process"/>
    <property type="evidence" value="ECO:0007669"/>
    <property type="project" value="UniProtKB-UniRule"/>
</dbReference>
<dbReference type="CDD" id="cd11322">
    <property type="entry name" value="AmyAc_Glg_BE"/>
    <property type="match status" value="1"/>
</dbReference>
<dbReference type="CDD" id="cd02855">
    <property type="entry name" value="E_set_GBE_prok_N"/>
    <property type="match status" value="1"/>
</dbReference>
<dbReference type="FunFam" id="2.60.40.1180:FF:000002">
    <property type="entry name" value="1,4-alpha-glucan branching enzyme GlgB"/>
    <property type="match status" value="1"/>
</dbReference>
<dbReference type="FunFam" id="3.20.20.80:FF:000003">
    <property type="entry name" value="1,4-alpha-glucan branching enzyme GlgB"/>
    <property type="match status" value="1"/>
</dbReference>
<dbReference type="Gene3D" id="3.20.20.80">
    <property type="entry name" value="Glycosidases"/>
    <property type="match status" value="1"/>
</dbReference>
<dbReference type="Gene3D" id="2.60.40.1180">
    <property type="entry name" value="Golgi alpha-mannosidase II"/>
    <property type="match status" value="1"/>
</dbReference>
<dbReference type="Gene3D" id="2.60.40.10">
    <property type="entry name" value="Immunoglobulins"/>
    <property type="match status" value="2"/>
</dbReference>
<dbReference type="HAMAP" id="MF_00685">
    <property type="entry name" value="GlgB"/>
    <property type="match status" value="1"/>
</dbReference>
<dbReference type="InterPro" id="IPR006048">
    <property type="entry name" value="A-amylase/branching_C"/>
</dbReference>
<dbReference type="InterPro" id="IPR037439">
    <property type="entry name" value="Branching_enzy"/>
</dbReference>
<dbReference type="InterPro" id="IPR006407">
    <property type="entry name" value="GlgB"/>
</dbReference>
<dbReference type="InterPro" id="IPR054169">
    <property type="entry name" value="GlgB_N"/>
</dbReference>
<dbReference type="InterPro" id="IPR044143">
    <property type="entry name" value="GlgB_N_E_set_prok"/>
</dbReference>
<dbReference type="InterPro" id="IPR006047">
    <property type="entry name" value="Glyco_hydro_13_cat_dom"/>
</dbReference>
<dbReference type="InterPro" id="IPR004193">
    <property type="entry name" value="Glyco_hydro_13_N"/>
</dbReference>
<dbReference type="InterPro" id="IPR013780">
    <property type="entry name" value="Glyco_hydro_b"/>
</dbReference>
<dbReference type="InterPro" id="IPR017853">
    <property type="entry name" value="Glycoside_hydrolase_SF"/>
</dbReference>
<dbReference type="InterPro" id="IPR013783">
    <property type="entry name" value="Ig-like_fold"/>
</dbReference>
<dbReference type="InterPro" id="IPR014756">
    <property type="entry name" value="Ig_E-set"/>
</dbReference>
<dbReference type="NCBIfam" id="TIGR01515">
    <property type="entry name" value="branching_enzym"/>
    <property type="match status" value="1"/>
</dbReference>
<dbReference type="NCBIfam" id="NF003811">
    <property type="entry name" value="PRK05402.1"/>
    <property type="match status" value="1"/>
</dbReference>
<dbReference type="NCBIfam" id="NF008967">
    <property type="entry name" value="PRK12313.1"/>
    <property type="match status" value="1"/>
</dbReference>
<dbReference type="PANTHER" id="PTHR43651">
    <property type="entry name" value="1,4-ALPHA-GLUCAN-BRANCHING ENZYME"/>
    <property type="match status" value="1"/>
</dbReference>
<dbReference type="PANTHER" id="PTHR43651:SF3">
    <property type="entry name" value="1,4-ALPHA-GLUCAN-BRANCHING ENZYME"/>
    <property type="match status" value="1"/>
</dbReference>
<dbReference type="Pfam" id="PF00128">
    <property type="entry name" value="Alpha-amylase"/>
    <property type="match status" value="1"/>
</dbReference>
<dbReference type="Pfam" id="PF02806">
    <property type="entry name" value="Alpha-amylase_C"/>
    <property type="match status" value="1"/>
</dbReference>
<dbReference type="Pfam" id="PF02922">
    <property type="entry name" value="CBM_48"/>
    <property type="match status" value="1"/>
</dbReference>
<dbReference type="Pfam" id="PF22019">
    <property type="entry name" value="GlgB_N"/>
    <property type="match status" value="1"/>
</dbReference>
<dbReference type="PIRSF" id="PIRSF000463">
    <property type="entry name" value="GlgB"/>
    <property type="match status" value="1"/>
</dbReference>
<dbReference type="SMART" id="SM00642">
    <property type="entry name" value="Aamy"/>
    <property type="match status" value="1"/>
</dbReference>
<dbReference type="SUPFAM" id="SSF51445">
    <property type="entry name" value="(Trans)glycosidases"/>
    <property type="match status" value="1"/>
</dbReference>
<dbReference type="SUPFAM" id="SSF81296">
    <property type="entry name" value="E set domains"/>
    <property type="match status" value="1"/>
</dbReference>
<dbReference type="SUPFAM" id="SSF51011">
    <property type="entry name" value="Glycosyl hydrolase domain"/>
    <property type="match status" value="1"/>
</dbReference>
<keyword id="KW-0119">Carbohydrate metabolism</keyword>
<keyword id="KW-0320">Glycogen biosynthesis</keyword>
<keyword id="KW-0321">Glycogen metabolism</keyword>
<keyword id="KW-0328">Glycosyltransferase</keyword>
<keyword id="KW-0808">Transferase</keyword>
<proteinExistence type="inferred from homology"/>
<gene>
    <name evidence="1" type="primary">glgB</name>
    <name type="ordered locus">VPA1618</name>
</gene>
<protein>
    <recommendedName>
        <fullName evidence="1">1,4-alpha-glucan branching enzyme GlgB</fullName>
        <ecNumber evidence="1">2.4.1.18</ecNumber>
    </recommendedName>
    <alternativeName>
        <fullName evidence="1">1,4-alpha-D-glucan:1,4-alpha-D-glucan 6-glucosyl-transferase</fullName>
    </alternativeName>
    <alternativeName>
        <fullName evidence="1">Alpha-(1-&gt;4)-glucan branching enzyme</fullName>
    </alternativeName>
    <alternativeName>
        <fullName evidence="1">Glycogen branching enzyme</fullName>
        <shortName evidence="1">BE</shortName>
    </alternativeName>
</protein>
<feature type="chain" id="PRO_0000188761" description="1,4-alpha-glucan branching enzyme GlgB">
    <location>
        <begin position="1"/>
        <end position="755"/>
    </location>
</feature>
<feature type="active site" description="Nucleophile" evidence="1">
    <location>
        <position position="435"/>
    </location>
</feature>
<feature type="active site" description="Proton donor" evidence="1">
    <location>
        <position position="488"/>
    </location>
</feature>
<organism>
    <name type="scientific">Vibrio parahaemolyticus serotype O3:K6 (strain RIMD 2210633)</name>
    <dbReference type="NCBI Taxonomy" id="223926"/>
    <lineage>
        <taxon>Bacteria</taxon>
        <taxon>Pseudomonadati</taxon>
        <taxon>Pseudomonadota</taxon>
        <taxon>Gammaproteobacteria</taxon>
        <taxon>Vibrionales</taxon>
        <taxon>Vibrionaceae</taxon>
        <taxon>Vibrio</taxon>
    </lineage>
</organism>
<evidence type="ECO:0000255" key="1">
    <source>
        <dbReference type="HAMAP-Rule" id="MF_00685"/>
    </source>
</evidence>
<name>GLGB_VIBPA</name>
<accession>Q87FR0</accession>
<comment type="function">
    <text evidence="1">Catalyzes the formation of the alpha-1,6-glucosidic linkages in glycogen by scission of a 1,4-alpha-linked oligosaccharide from growing alpha-1,4-glucan chains and the subsequent attachment of the oligosaccharide to the alpha-1,6 position.</text>
</comment>
<comment type="catalytic activity">
    <reaction evidence="1">
        <text>Transfers a segment of a (1-&gt;4)-alpha-D-glucan chain to a primary hydroxy group in a similar glucan chain.</text>
        <dbReference type="EC" id="2.4.1.18"/>
    </reaction>
</comment>
<comment type="pathway">
    <text evidence="1">Glycan biosynthesis; glycogen biosynthesis.</text>
</comment>
<comment type="subunit">
    <text evidence="1">Monomer.</text>
</comment>
<comment type="similarity">
    <text evidence="1">Belongs to the glycosyl hydrolase 13 family. GlgB subfamily.</text>
</comment>
<sequence length="755" mass="87504">MSSQRWLWRNQHSVQTNIGSREKDLKITKTKKIKKKHERAYELLAEAAYSDPFAALGPFIDDGEGSLRVWMPGANKVELLVNGEPRVALERDGDSGFILKEQRDLHLTHYRLAVDWNGVEQIIDDPYQYHNIYQEYEHLHTPKDMYHYMGAHFVTLERGGENISGVRFLVYAPHASAVSLVGCFNQWDGRRHPMQRLDYGIWGLFIPGLEEGVQYKFELKGPNGEGLPHKQDPWGFYSEQYPSFASITYDHKRYQWQDAKWQNRAVTQKRDEALSFYELHAGSWKRDGKGDFLNYRELAEQLVPYLVDMGYTHVELMPVSEHPFYGSWGYQPVGLFAPTSRYGSPDDFKFFVDACHQAGIGVVLDWVPAHFPSDDHGLANFDGTPLFHDPDPRRGWHQDWNSYIYDLGREHVRRFLVSNALYWFEQFHIDGIRVDAVASMLYLDYSRSHDQWVPNVDGGNENYDAIATLKWMNEEVYKHFPNAMTIAEESTAFPGVSAPTFMGGLGFGFKWNMGWMHDSLSYVKEDPVHRKYHHNTITFPLVYAHSENYVLSLSHDEVVYGKGSIHNKMPGDEWQQTANLRAYYGYMYGQPGKKLNFMGAEIGQTAEWNHDDQLQWFLLEYERHQGVQKLMRDLNHLYRNEAAMHDQDCVPAGFEWRLQDEADASILAHERISKEGERILIITNFTPVPHERFRLGVPNVGQYELLLNTDDSKYGGSDFKVLTSVKTEKVESESLPQSLELRLPPLSTVFYKLHK</sequence>
<reference key="1">
    <citation type="journal article" date="2003" name="Lancet">
        <title>Genome sequence of Vibrio parahaemolyticus: a pathogenic mechanism distinct from that of V. cholerae.</title>
        <authorList>
            <person name="Makino K."/>
            <person name="Oshima K."/>
            <person name="Kurokawa K."/>
            <person name="Yokoyama K."/>
            <person name="Uda T."/>
            <person name="Tagomori K."/>
            <person name="Iijima Y."/>
            <person name="Najima M."/>
            <person name="Nakano M."/>
            <person name="Yamashita A."/>
            <person name="Kubota Y."/>
            <person name="Kimura S."/>
            <person name="Yasunaga T."/>
            <person name="Honda T."/>
            <person name="Shinagawa H."/>
            <person name="Hattori M."/>
            <person name="Iida T."/>
        </authorList>
    </citation>
    <scope>NUCLEOTIDE SEQUENCE [LARGE SCALE GENOMIC DNA]</scope>
    <source>
        <strain>RIMD 2210633</strain>
    </source>
</reference>